<comment type="function">
    <text evidence="3 4 7">GTPase involved in the biogenesis of the 60S ribosomal subunit and translational activation of ribosomes. Together with SDO1, may trigger the GTP-dependent release of TIF6 from 60S pre-ribosomes in the cytoplasm, thereby activating ribosomes for translation competence by allowing 80S ribosome assembly and facilitating TIF6 recycling to the nucleus, where it is required for 60S rRNA processing and nuclear export. Inhibits GTPase activity of ribosome-bound EF-2.</text>
</comment>
<comment type="catalytic activity">
    <reaction evidence="4">
        <text>GTP + H2O = GDP + phosphate + H(+)</text>
        <dbReference type="Rhea" id="RHEA:19669"/>
        <dbReference type="ChEBI" id="CHEBI:15377"/>
        <dbReference type="ChEBI" id="CHEBI:15378"/>
        <dbReference type="ChEBI" id="CHEBI:37565"/>
        <dbReference type="ChEBI" id="CHEBI:43474"/>
        <dbReference type="ChEBI" id="CHEBI:58189"/>
    </reaction>
</comment>
<comment type="activity regulation">
    <text evidence="4">GTPase activity is stimulated in the presence of 60S subunits.</text>
</comment>
<comment type="interaction">
    <interactant intactId="EBI-28980">
        <id>P53893</id>
    </interactant>
    <interactant intactId="EBI-27124">
        <id>Q07953</id>
        <label>SDO1</label>
    </interactant>
    <organismsDiffer>false</organismsDiffer>
    <experiments>3</experiments>
</comment>
<comment type="subcellular location">
    <subcellularLocation>
        <location evidence="3 4 5">Cytoplasm</location>
    </subcellularLocation>
</comment>
<comment type="miscellaneous">
    <text evidence="6">Present with 7770 molecules/cell in log phase SD medium.</text>
</comment>
<comment type="similarity">
    <text evidence="2">Belongs to the TRAFAC class translation factor GTPase superfamily. Classic translation factor GTPase family.</text>
</comment>
<sequence>MPRVESETYKRLQNDPSCIRNICIVAHVDHGKTSLSDSLLASNGIISQRLAGKIRFLDARPDEQLRGITMESSAISLYFRVLRKQEGSDEPLVSEHLVNLIDSPGHIDFSSEVSAASRLCDGAVVLVDVVEGVCSQTVTVLRQCWTEKLKPILVLNKIDRLITELQLTPQEAYIHLSKVIEQVNSVIGSFFANERQLDDLFWREQLEKNENAEYIEKDDSGIYFNPTDNNVIFASAIDGWGFNIGQLAKFYEQKLGAKRENLQKVLWGDFYMDPKTKKIINNKGLKGRSLKPLFTSLILENIWKIYQNIITSRDSEMVEKIAKTLNIKLLARDLRSKDDKQLLRTIMGQWLPVSTAVLLTVIEKLPSPLESQTDRLNTILVSESDTAAMDPRLLKAMKTCDKEGPVSAYVSKMLSIPREELPVESKRIASSDELMERSRKAREEALNAAKHAGMVENMAMMDLNDNSKNTSDLYKRAKDTVMTPEVGEQTKPKPSRNNDVFCVVSEPSSALDLEFEYEGEDDSDSQDNFGLDFVPTDIDPNDPLSSMFEYEEEDPLLESIKQISEDVNDEVDDIFDEKEECLVAFARIYSGTLRVGQEISVLGPKYDPKCPEEHIETAIITHLYLFMGKELVPLDVCPSGNIVGIRGLAGKVLKSGTLIEKGVQGVNLAGVNFHFTPIVRVAVEPANPVEMSKLVRGLKLLDQADPCVHTYVENTGEHILCTAGELHLERCLKDLTERFAGIEITHSEPAIPYRETFLSASDMNPPQNSQLGRGVHELLLSQYKITFRTFPLSGKVTDFLSQHQNSIKNILKTSTSSMDPVIESTGSSFLDKKSLLVAFEEVINQEEKSRELLSGFKVKLAGFGPSRVGCNILLSQDNLLGSLFEGTPAAFEYSDSIKNGFQLAVSEGPLANEPVQGMCVLVESVHKMSQDEIESIEDPRYQQHIVDLSGRLITSTRDAIHEAFLDWSPRIMWAIYSCDIQTSVDVLGKVYAVILQRHGKIISEEMKEGTPFFQIEAHVPVVEAFGLSEDIRKRTSGAAQPQLVFSGFECIDLDPFWVPTTEEELEELGDTADRENIARKHMNAIRRRKGLFIEEKVVENAEKQRTLKKN</sequence>
<accession>P53893</accession>
<accession>D6W119</accession>
<evidence type="ECO:0000250" key="1"/>
<evidence type="ECO:0000255" key="2">
    <source>
        <dbReference type="PROSITE-ProRule" id="PRU01059"/>
    </source>
</evidence>
<evidence type="ECO:0000269" key="3">
    <source>
    </source>
</evidence>
<evidence type="ECO:0000269" key="4">
    <source>
    </source>
</evidence>
<evidence type="ECO:0000269" key="5">
    <source>
    </source>
</evidence>
<evidence type="ECO:0000269" key="6">
    <source>
    </source>
</evidence>
<evidence type="ECO:0000269" key="7">
    <source>
    </source>
</evidence>
<evidence type="ECO:0007744" key="8">
    <source>
    </source>
</evidence>
<proteinExistence type="evidence at protein level"/>
<gene>
    <name type="primary">RIA1</name>
    <name type="synonym">EFL1</name>
    <name type="ordered locus">YNL163C</name>
    <name type="ORF">N1718</name>
</gene>
<feature type="chain" id="PRO_0000091559" description="Ribosome assembly protein 1">
    <location>
        <begin position="1"/>
        <end position="1110"/>
    </location>
</feature>
<feature type="domain" description="tr-type G" evidence="2">
    <location>
        <begin position="17"/>
        <end position="262"/>
    </location>
</feature>
<feature type="binding site" evidence="1">
    <location>
        <begin position="26"/>
        <end position="33"/>
    </location>
    <ligand>
        <name>GTP</name>
        <dbReference type="ChEBI" id="CHEBI:37565"/>
    </ligand>
</feature>
<feature type="binding site" evidence="1">
    <location>
        <begin position="102"/>
        <end position="106"/>
    </location>
    <ligand>
        <name>GTP</name>
        <dbReference type="ChEBI" id="CHEBI:37565"/>
    </ligand>
</feature>
<feature type="binding site" evidence="1">
    <location>
        <begin position="156"/>
        <end position="159"/>
    </location>
    <ligand>
        <name>GTP</name>
        <dbReference type="ChEBI" id="CHEBI:37565"/>
    </ligand>
</feature>
<feature type="modified residue" description="Phosphoserine" evidence="8">
    <location>
        <position position="431"/>
    </location>
</feature>
<protein>
    <recommendedName>
        <fullName>Ribosome assembly protein 1</fullName>
        <ecNumber evidence="4">3.6.5.-</ecNumber>
    </recommendedName>
    <alternativeName>
        <fullName>EF-2-like GTPase</fullName>
    </alternativeName>
    <alternativeName>
        <fullName>Elongation factor-like 1</fullName>
    </alternativeName>
</protein>
<name>RIA1_YEAST</name>
<organism>
    <name type="scientific">Saccharomyces cerevisiae (strain ATCC 204508 / S288c)</name>
    <name type="common">Baker's yeast</name>
    <dbReference type="NCBI Taxonomy" id="559292"/>
    <lineage>
        <taxon>Eukaryota</taxon>
        <taxon>Fungi</taxon>
        <taxon>Dikarya</taxon>
        <taxon>Ascomycota</taxon>
        <taxon>Saccharomycotina</taxon>
        <taxon>Saccharomycetes</taxon>
        <taxon>Saccharomycetales</taxon>
        <taxon>Saccharomycetaceae</taxon>
        <taxon>Saccharomyces</taxon>
    </lineage>
</organism>
<reference key="1">
    <citation type="journal article" date="1996" name="Yeast">
        <title>The sequence of 36.8 kb from the left arm of chromosome XIV reveals 24 complete open reading frames: 18 correspond to new genes, one of which encodes a protein similar to the human myotonic dystrophy kinase.</title>
        <authorList>
            <person name="Nasr F."/>
            <person name="Becam A.-M."/>
            <person name="Herbert C.J."/>
        </authorList>
    </citation>
    <scope>NUCLEOTIDE SEQUENCE [GENOMIC DNA]</scope>
    <source>
        <strain>ATCC 96604 / S288c / FY1679</strain>
    </source>
</reference>
<reference key="2">
    <citation type="journal article" date="1997" name="Nature">
        <title>The nucleotide sequence of Saccharomyces cerevisiae chromosome XIV and its evolutionary implications.</title>
        <authorList>
            <person name="Philippsen P."/>
            <person name="Kleine K."/>
            <person name="Poehlmann R."/>
            <person name="Duesterhoeft A."/>
            <person name="Hamberg K."/>
            <person name="Hegemann J.H."/>
            <person name="Obermaier B."/>
            <person name="Urrestarazu L.A."/>
            <person name="Aert R."/>
            <person name="Albermann K."/>
            <person name="Altmann R."/>
            <person name="Andre B."/>
            <person name="Baladron V."/>
            <person name="Ballesta J.P.G."/>
            <person name="Becam A.-M."/>
            <person name="Beinhauer J.D."/>
            <person name="Boskovic J."/>
            <person name="Buitrago M.J."/>
            <person name="Bussereau F."/>
            <person name="Coster F."/>
            <person name="Crouzet M."/>
            <person name="D'Angelo M."/>
            <person name="Dal Pero F."/>
            <person name="De Antoni A."/>
            <person name="del Rey F."/>
            <person name="Doignon F."/>
            <person name="Domdey H."/>
            <person name="Dubois E."/>
            <person name="Fiedler T.A."/>
            <person name="Fleig U."/>
            <person name="Floeth M."/>
            <person name="Fritz C."/>
            <person name="Gaillardin C."/>
            <person name="Garcia-Cantalejo J.M."/>
            <person name="Glansdorff N."/>
            <person name="Goffeau A."/>
            <person name="Gueldener U."/>
            <person name="Herbert C.J."/>
            <person name="Heumann K."/>
            <person name="Heuss-Neitzel D."/>
            <person name="Hilbert H."/>
            <person name="Hinni K."/>
            <person name="Iraqui Houssaini I."/>
            <person name="Jacquet M."/>
            <person name="Jimenez A."/>
            <person name="Jonniaux J.-L."/>
            <person name="Karpfinger-Hartl L."/>
            <person name="Lanfranchi G."/>
            <person name="Lepingle A."/>
            <person name="Levesque H."/>
            <person name="Lyck R."/>
            <person name="Maftahi M."/>
            <person name="Mallet L."/>
            <person name="Maurer C.T.C."/>
            <person name="Messenguy F."/>
            <person name="Mewes H.-W."/>
            <person name="Moestl D."/>
            <person name="Nasr F."/>
            <person name="Nicaud J.-M."/>
            <person name="Niedenthal R.K."/>
            <person name="Pandolfo D."/>
            <person name="Pierard A."/>
            <person name="Piravandi E."/>
            <person name="Planta R.J."/>
            <person name="Pohl T.M."/>
            <person name="Purnelle B."/>
            <person name="Rebischung C."/>
            <person name="Remacha M.A."/>
            <person name="Revuelta J.L."/>
            <person name="Rinke M."/>
            <person name="Saiz J.E."/>
            <person name="Sartorello F."/>
            <person name="Scherens B."/>
            <person name="Sen-Gupta M."/>
            <person name="Soler-Mira A."/>
            <person name="Urbanus J.H.M."/>
            <person name="Valle G."/>
            <person name="Van Dyck L."/>
            <person name="Verhasselt P."/>
            <person name="Vierendeels F."/>
            <person name="Vissers S."/>
            <person name="Voet M."/>
            <person name="Volckaert G."/>
            <person name="Wach A."/>
            <person name="Wambutt R."/>
            <person name="Wedler H."/>
            <person name="Zollner A."/>
            <person name="Hani J."/>
        </authorList>
    </citation>
    <scope>NUCLEOTIDE SEQUENCE [LARGE SCALE GENOMIC DNA]</scope>
    <source>
        <strain>ATCC 204508 / S288c</strain>
    </source>
</reference>
<reference key="3">
    <citation type="journal article" date="2014" name="G3 (Bethesda)">
        <title>The reference genome sequence of Saccharomyces cerevisiae: Then and now.</title>
        <authorList>
            <person name="Engel S.R."/>
            <person name="Dietrich F.S."/>
            <person name="Fisk D.G."/>
            <person name="Binkley G."/>
            <person name="Balakrishnan R."/>
            <person name="Costanzo M.C."/>
            <person name="Dwight S.S."/>
            <person name="Hitz B.C."/>
            <person name="Karra K."/>
            <person name="Nash R.S."/>
            <person name="Weng S."/>
            <person name="Wong E.D."/>
            <person name="Lloyd P."/>
            <person name="Skrzypek M.S."/>
            <person name="Miyasato S.R."/>
            <person name="Simison M."/>
            <person name="Cherry J.M."/>
        </authorList>
    </citation>
    <scope>GENOME REANNOTATION</scope>
    <source>
        <strain>ATCC 204508 / S288c</strain>
    </source>
</reference>
<reference key="4">
    <citation type="journal article" date="2001" name="Mol. Cell">
        <title>The nucle(ol)ar Tif6p and Efl1p are required for a late cytoplasmic step of ribosome synthesis.</title>
        <authorList>
            <person name="Senger B."/>
            <person name="Lafontaine D.L.J."/>
            <person name="Graindorge J.-S."/>
            <person name="Gadal O."/>
            <person name="Camasses A."/>
            <person name="Sanni A."/>
            <person name="Garnier J.-M."/>
            <person name="Breitenbach M."/>
            <person name="Hurt E."/>
            <person name="Fasiolo F."/>
        </authorList>
    </citation>
    <scope>FUNCTION</scope>
    <scope>SUBCELLULAR LOCATION</scope>
    <scope>ACTIVITY REGULATION</scope>
    <scope>CATALYTIC ACTIVITY</scope>
</reference>
<reference key="5">
    <citation type="journal article" date="2001" name="Mol. Genet. Genomics">
        <title>Ria1p (Ynl163c), a protein similar to elongation factors 2, is involved in the biogenesis of the 60S subunit of the ribosome in Saccharomyces cerevisiae.</title>
        <authorList>
            <person name="Becam A.-M."/>
            <person name="Nasr F."/>
            <person name="Racki W.J."/>
            <person name="Zagulski M."/>
            <person name="Herbert C.J."/>
        </authorList>
    </citation>
    <scope>FUNCTION</scope>
    <scope>SUBCELLULAR LOCATION</scope>
</reference>
<reference key="6">
    <citation type="journal article" date="2003" name="Nature">
        <title>Global analysis of protein localization in budding yeast.</title>
        <authorList>
            <person name="Huh W.-K."/>
            <person name="Falvo J.V."/>
            <person name="Gerke L.C."/>
            <person name="Carroll A.S."/>
            <person name="Howson R.W."/>
            <person name="Weissman J.S."/>
            <person name="O'Shea E.K."/>
        </authorList>
    </citation>
    <scope>SUBCELLULAR LOCATION [LARGE SCALE ANALYSIS]</scope>
</reference>
<reference key="7">
    <citation type="journal article" date="2003" name="Nature">
        <title>Global analysis of protein expression in yeast.</title>
        <authorList>
            <person name="Ghaemmaghami S."/>
            <person name="Huh W.-K."/>
            <person name="Bower K."/>
            <person name="Howson R.W."/>
            <person name="Belle A."/>
            <person name="Dephoure N."/>
            <person name="O'Shea E.K."/>
            <person name="Weissman J.S."/>
        </authorList>
    </citation>
    <scope>LEVEL OF PROTEIN EXPRESSION [LARGE SCALE ANALYSIS]</scope>
</reference>
<reference key="8">
    <citation type="journal article" date="2005" name="J. Mol. Biol.">
        <title>Deletion of EFL1 results in heterogeneity of the 60 S GTPase-associated rRNA conformation.</title>
        <authorList>
            <person name="Graindorge J.-S."/>
            <person name="Rousselle J.-C."/>
            <person name="Senger B."/>
            <person name="Lenormand P."/>
            <person name="Namane A."/>
            <person name="Lacroute F."/>
            <person name="Fasiolo F."/>
        </authorList>
    </citation>
    <scope>FUNCTION</scope>
</reference>
<reference key="9">
    <citation type="journal article" date="2008" name="Mol. Cell. Proteomics">
        <title>A multidimensional chromatography technology for in-depth phosphoproteome analysis.</title>
        <authorList>
            <person name="Albuquerque C.P."/>
            <person name="Smolka M.B."/>
            <person name="Payne S.H."/>
            <person name="Bafna V."/>
            <person name="Eng J."/>
            <person name="Zhou H."/>
        </authorList>
    </citation>
    <scope>IDENTIFICATION BY MASS SPECTROMETRY [LARGE SCALE ANALYSIS]</scope>
</reference>
<reference key="10">
    <citation type="journal article" date="2009" name="Science">
        <title>Global analysis of Cdk1 substrate phosphorylation sites provides insights into evolution.</title>
        <authorList>
            <person name="Holt L.J."/>
            <person name="Tuch B.B."/>
            <person name="Villen J."/>
            <person name="Johnson A.D."/>
            <person name="Gygi S.P."/>
            <person name="Morgan D.O."/>
        </authorList>
    </citation>
    <scope>PHOSPHORYLATION [LARGE SCALE ANALYSIS] AT SER-431</scope>
    <scope>IDENTIFICATION BY MASS SPECTROMETRY [LARGE SCALE ANALYSIS]</scope>
</reference>
<dbReference type="EC" id="3.6.5.-" evidence="4"/>
<dbReference type="EMBL" id="X92517">
    <property type="protein sequence ID" value="CAA63276.1"/>
    <property type="molecule type" value="Genomic_DNA"/>
</dbReference>
<dbReference type="EMBL" id="Z71439">
    <property type="protein sequence ID" value="CAA96050.1"/>
    <property type="molecule type" value="Genomic_DNA"/>
</dbReference>
<dbReference type="EMBL" id="BK006947">
    <property type="protein sequence ID" value="DAA10385.1"/>
    <property type="molecule type" value="Genomic_DNA"/>
</dbReference>
<dbReference type="PIR" id="S60964">
    <property type="entry name" value="S60964"/>
</dbReference>
<dbReference type="RefSeq" id="NP_014236.1">
    <property type="nucleotide sequence ID" value="NM_001183001.1"/>
</dbReference>
<dbReference type="SASBDB" id="P53893"/>
<dbReference type="SMR" id="P53893"/>
<dbReference type="BioGRID" id="35665">
    <property type="interactions" value="382"/>
</dbReference>
<dbReference type="DIP" id="DIP-2553N"/>
<dbReference type="FunCoup" id="P53893">
    <property type="interactions" value="903"/>
</dbReference>
<dbReference type="IntAct" id="P53893">
    <property type="interactions" value="16"/>
</dbReference>
<dbReference type="MINT" id="P53893"/>
<dbReference type="STRING" id="4932.YNL163C"/>
<dbReference type="iPTMnet" id="P53893"/>
<dbReference type="PaxDb" id="4932-YNL163C"/>
<dbReference type="PeptideAtlas" id="P53893"/>
<dbReference type="EnsemblFungi" id="YNL163C_mRNA">
    <property type="protein sequence ID" value="YNL163C"/>
    <property type="gene ID" value="YNL163C"/>
</dbReference>
<dbReference type="GeneID" id="855558"/>
<dbReference type="KEGG" id="sce:YNL163C"/>
<dbReference type="AGR" id="SGD:S000005107"/>
<dbReference type="SGD" id="S000005107">
    <property type="gene designation" value="RIA1"/>
</dbReference>
<dbReference type="VEuPathDB" id="FungiDB:YNL163C"/>
<dbReference type="eggNOG" id="KOG0467">
    <property type="taxonomic scope" value="Eukaryota"/>
</dbReference>
<dbReference type="GeneTree" id="ENSGT00550000074806"/>
<dbReference type="HOGENOM" id="CLU_002794_3_1_1"/>
<dbReference type="InParanoid" id="P53893"/>
<dbReference type="OMA" id="FARCDIQ"/>
<dbReference type="OrthoDB" id="364892at2759"/>
<dbReference type="BioCyc" id="YEAST:G3O-33179-MONOMER"/>
<dbReference type="BRENDA" id="3.6.5.3">
    <property type="organism ID" value="984"/>
</dbReference>
<dbReference type="BioGRID-ORCS" id="855558">
    <property type="hits" value="0 hits in 10 CRISPR screens"/>
</dbReference>
<dbReference type="PRO" id="PR:P53893"/>
<dbReference type="Proteomes" id="UP000002311">
    <property type="component" value="Chromosome XIV"/>
</dbReference>
<dbReference type="RNAct" id="P53893">
    <property type="molecule type" value="protein"/>
</dbReference>
<dbReference type="GO" id="GO:0005737">
    <property type="term" value="C:cytoplasm"/>
    <property type="evidence" value="ECO:0000314"/>
    <property type="project" value="SGD"/>
</dbReference>
<dbReference type="GO" id="GO:0005829">
    <property type="term" value="C:cytosol"/>
    <property type="evidence" value="ECO:0007005"/>
    <property type="project" value="SGD"/>
</dbReference>
<dbReference type="GO" id="GO:1990904">
    <property type="term" value="C:ribonucleoprotein complex"/>
    <property type="evidence" value="ECO:0000318"/>
    <property type="project" value="GO_Central"/>
</dbReference>
<dbReference type="GO" id="GO:0005525">
    <property type="term" value="F:GTP binding"/>
    <property type="evidence" value="ECO:0007669"/>
    <property type="project" value="UniProtKB-KW"/>
</dbReference>
<dbReference type="GO" id="GO:0003924">
    <property type="term" value="F:GTPase activity"/>
    <property type="evidence" value="ECO:0000314"/>
    <property type="project" value="SGD"/>
</dbReference>
<dbReference type="GO" id="GO:0043022">
    <property type="term" value="F:ribosome binding"/>
    <property type="evidence" value="ECO:0000318"/>
    <property type="project" value="GO_Central"/>
</dbReference>
<dbReference type="GO" id="GO:0042256">
    <property type="term" value="P:cytosolic ribosome assembly"/>
    <property type="evidence" value="ECO:0000315"/>
    <property type="project" value="SGD"/>
</dbReference>
<dbReference type="CDD" id="cd01681">
    <property type="entry name" value="aeEF2_snRNP_like_IV"/>
    <property type="match status" value="1"/>
</dbReference>
<dbReference type="CDD" id="cd04096">
    <property type="entry name" value="eEF2_snRNP_like_C"/>
    <property type="match status" value="1"/>
</dbReference>
<dbReference type="CDD" id="cd01885">
    <property type="entry name" value="EF2"/>
    <property type="match status" value="1"/>
</dbReference>
<dbReference type="CDD" id="cd16268">
    <property type="entry name" value="EF2_II"/>
    <property type="match status" value="1"/>
</dbReference>
<dbReference type="CDD" id="cd16261">
    <property type="entry name" value="EF2_snRNP_III"/>
    <property type="match status" value="1"/>
</dbReference>
<dbReference type="FunFam" id="3.30.70.240:FF:000006">
    <property type="entry name" value="Elongation factor like GTPase 1"/>
    <property type="match status" value="1"/>
</dbReference>
<dbReference type="FunFam" id="2.40.30.10:FF:000188">
    <property type="entry name" value="Ria1p"/>
    <property type="match status" value="1"/>
</dbReference>
<dbReference type="FunFam" id="3.40.50.300:FF:000746">
    <property type="entry name" value="Ribosome assembly protein 1"/>
    <property type="match status" value="1"/>
</dbReference>
<dbReference type="FunFam" id="3.30.70.870:FF:000002">
    <property type="entry name" value="Translation elongation factor 2"/>
    <property type="match status" value="1"/>
</dbReference>
<dbReference type="Gene3D" id="3.30.230.10">
    <property type="match status" value="1"/>
</dbReference>
<dbReference type="Gene3D" id="3.30.70.240">
    <property type="match status" value="1"/>
</dbReference>
<dbReference type="Gene3D" id="3.30.70.870">
    <property type="entry name" value="Elongation Factor G (Translational Gtpase), domain 3"/>
    <property type="match status" value="1"/>
</dbReference>
<dbReference type="Gene3D" id="3.40.50.300">
    <property type="entry name" value="P-loop containing nucleotide triphosphate hydrolases"/>
    <property type="match status" value="1"/>
</dbReference>
<dbReference type="Gene3D" id="2.40.30.10">
    <property type="entry name" value="Translation factors"/>
    <property type="match status" value="1"/>
</dbReference>
<dbReference type="InterPro" id="IPR041095">
    <property type="entry name" value="EFG_II"/>
</dbReference>
<dbReference type="InterPro" id="IPR035647">
    <property type="entry name" value="EFG_III/V"/>
</dbReference>
<dbReference type="InterPro" id="IPR000640">
    <property type="entry name" value="EFG_V-like"/>
</dbReference>
<dbReference type="InterPro" id="IPR056752">
    <property type="entry name" value="EFL1"/>
</dbReference>
<dbReference type="InterPro" id="IPR004161">
    <property type="entry name" value="EFTu-like_2"/>
</dbReference>
<dbReference type="InterPro" id="IPR027417">
    <property type="entry name" value="P-loop_NTPase"/>
</dbReference>
<dbReference type="InterPro" id="IPR020568">
    <property type="entry name" value="Ribosomal_Su5_D2-typ_SF"/>
</dbReference>
<dbReference type="InterPro" id="IPR014721">
    <property type="entry name" value="Ribsml_uS5_D2-typ_fold_subgr"/>
</dbReference>
<dbReference type="InterPro" id="IPR005225">
    <property type="entry name" value="Small_GTP-bd"/>
</dbReference>
<dbReference type="InterPro" id="IPR000795">
    <property type="entry name" value="T_Tr_GTP-bd_dom"/>
</dbReference>
<dbReference type="InterPro" id="IPR009000">
    <property type="entry name" value="Transl_B-barrel_sf"/>
</dbReference>
<dbReference type="NCBIfam" id="TIGR00231">
    <property type="entry name" value="small_GTP"/>
    <property type="match status" value="1"/>
</dbReference>
<dbReference type="PANTHER" id="PTHR42908:SF3">
    <property type="entry name" value="ELONGATION FACTOR-LIKE GTPASE 1"/>
    <property type="match status" value="1"/>
</dbReference>
<dbReference type="PANTHER" id="PTHR42908">
    <property type="entry name" value="TRANSLATION ELONGATION FACTOR-RELATED"/>
    <property type="match status" value="1"/>
</dbReference>
<dbReference type="Pfam" id="PF00679">
    <property type="entry name" value="EFG_C"/>
    <property type="match status" value="1"/>
</dbReference>
<dbReference type="Pfam" id="PF14492">
    <property type="entry name" value="EFG_III"/>
    <property type="match status" value="1"/>
</dbReference>
<dbReference type="Pfam" id="PF25118">
    <property type="entry name" value="EFL1"/>
    <property type="match status" value="1"/>
</dbReference>
<dbReference type="Pfam" id="PF00009">
    <property type="entry name" value="GTP_EFTU"/>
    <property type="match status" value="1"/>
</dbReference>
<dbReference type="Pfam" id="PF03144">
    <property type="entry name" value="GTP_EFTU_D2"/>
    <property type="match status" value="1"/>
</dbReference>
<dbReference type="PRINTS" id="PR00315">
    <property type="entry name" value="ELONGATNFCT"/>
</dbReference>
<dbReference type="SMART" id="SM00838">
    <property type="entry name" value="EFG_C"/>
    <property type="match status" value="1"/>
</dbReference>
<dbReference type="SUPFAM" id="SSF54980">
    <property type="entry name" value="EF-G C-terminal domain-like"/>
    <property type="match status" value="2"/>
</dbReference>
<dbReference type="SUPFAM" id="SSF52540">
    <property type="entry name" value="P-loop containing nucleoside triphosphate hydrolases"/>
    <property type="match status" value="1"/>
</dbReference>
<dbReference type="SUPFAM" id="SSF54211">
    <property type="entry name" value="Ribosomal protein S5 domain 2-like"/>
    <property type="match status" value="1"/>
</dbReference>
<dbReference type="SUPFAM" id="SSF50447">
    <property type="entry name" value="Translation proteins"/>
    <property type="match status" value="1"/>
</dbReference>
<dbReference type="PROSITE" id="PS51722">
    <property type="entry name" value="G_TR_2"/>
    <property type="match status" value="1"/>
</dbReference>
<keyword id="KW-0963">Cytoplasm</keyword>
<keyword id="KW-0342">GTP-binding</keyword>
<keyword id="KW-0378">Hydrolase</keyword>
<keyword id="KW-0547">Nucleotide-binding</keyword>
<keyword id="KW-0597">Phosphoprotein</keyword>
<keyword id="KW-1185">Reference proteome</keyword>
<keyword id="KW-0690">Ribosome biogenesis</keyword>